<protein>
    <recommendedName>
        <fullName evidence="1">Acyl carrier protein</fullName>
        <shortName evidence="1">ACP</shortName>
    </recommendedName>
</protein>
<keyword id="KW-0963">Cytoplasm</keyword>
<keyword id="KW-0275">Fatty acid biosynthesis</keyword>
<keyword id="KW-0276">Fatty acid metabolism</keyword>
<keyword id="KW-0444">Lipid biosynthesis</keyword>
<keyword id="KW-0443">Lipid metabolism</keyword>
<keyword id="KW-0596">Phosphopantetheine</keyword>
<keyword id="KW-0597">Phosphoprotein</keyword>
<organism>
    <name type="scientific">Chlorobium phaeovibrioides (strain DSM 265 / 1930)</name>
    <name type="common">Prosthecochloris vibrioformis (strain DSM 265)</name>
    <dbReference type="NCBI Taxonomy" id="290318"/>
    <lineage>
        <taxon>Bacteria</taxon>
        <taxon>Pseudomonadati</taxon>
        <taxon>Chlorobiota</taxon>
        <taxon>Chlorobiia</taxon>
        <taxon>Chlorobiales</taxon>
        <taxon>Chlorobiaceae</taxon>
        <taxon>Chlorobium/Pelodictyon group</taxon>
        <taxon>Chlorobium</taxon>
    </lineage>
</organism>
<gene>
    <name evidence="1" type="primary">acpP</name>
    <name type="ordered locus">Cvib_0197</name>
</gene>
<accession>A4SCL1</accession>
<comment type="function">
    <text evidence="1">Carrier of the growing fatty acid chain in fatty acid biosynthesis.</text>
</comment>
<comment type="pathway">
    <text evidence="1">Lipid metabolism; fatty acid biosynthesis.</text>
</comment>
<comment type="subcellular location">
    <subcellularLocation>
        <location evidence="1">Cytoplasm</location>
    </subcellularLocation>
</comment>
<comment type="PTM">
    <text evidence="1">4'-phosphopantetheine is transferred from CoA to a specific serine of apo-ACP by AcpS. This modification is essential for activity because fatty acids are bound in thioester linkage to the sulfhydryl of the prosthetic group.</text>
</comment>
<comment type="similarity">
    <text evidence="1">Belongs to the acyl carrier protein (ACP) family.</text>
</comment>
<feature type="chain" id="PRO_1000085607" description="Acyl carrier protein">
    <location>
        <begin position="1"/>
        <end position="78"/>
    </location>
</feature>
<feature type="domain" description="Carrier" evidence="2">
    <location>
        <begin position="4"/>
        <end position="78"/>
    </location>
</feature>
<feature type="modified residue" description="O-(pantetheine 4'-phosphoryl)serine" evidence="2">
    <location>
        <position position="39"/>
    </location>
</feature>
<dbReference type="EMBL" id="CP000607">
    <property type="protein sequence ID" value="ABP36220.1"/>
    <property type="molecule type" value="Genomic_DNA"/>
</dbReference>
<dbReference type="SMR" id="A4SCL1"/>
<dbReference type="STRING" id="290318.Cvib_0197"/>
<dbReference type="KEGG" id="pvi:Cvib_0197"/>
<dbReference type="eggNOG" id="COG0236">
    <property type="taxonomic scope" value="Bacteria"/>
</dbReference>
<dbReference type="HOGENOM" id="CLU_108696_5_1_10"/>
<dbReference type="OrthoDB" id="9804551at2"/>
<dbReference type="UniPathway" id="UPA00094"/>
<dbReference type="GO" id="GO:0005829">
    <property type="term" value="C:cytosol"/>
    <property type="evidence" value="ECO:0007669"/>
    <property type="project" value="TreeGrafter"/>
</dbReference>
<dbReference type="GO" id="GO:0016020">
    <property type="term" value="C:membrane"/>
    <property type="evidence" value="ECO:0007669"/>
    <property type="project" value="GOC"/>
</dbReference>
<dbReference type="GO" id="GO:0000035">
    <property type="term" value="F:acyl binding"/>
    <property type="evidence" value="ECO:0007669"/>
    <property type="project" value="TreeGrafter"/>
</dbReference>
<dbReference type="GO" id="GO:0000036">
    <property type="term" value="F:acyl carrier activity"/>
    <property type="evidence" value="ECO:0007669"/>
    <property type="project" value="UniProtKB-UniRule"/>
</dbReference>
<dbReference type="GO" id="GO:0009245">
    <property type="term" value="P:lipid A biosynthetic process"/>
    <property type="evidence" value="ECO:0007669"/>
    <property type="project" value="TreeGrafter"/>
</dbReference>
<dbReference type="FunFam" id="1.10.1200.10:FF:000001">
    <property type="entry name" value="Acyl carrier protein"/>
    <property type="match status" value="1"/>
</dbReference>
<dbReference type="Gene3D" id="1.10.1200.10">
    <property type="entry name" value="ACP-like"/>
    <property type="match status" value="1"/>
</dbReference>
<dbReference type="HAMAP" id="MF_01217">
    <property type="entry name" value="Acyl_carrier"/>
    <property type="match status" value="1"/>
</dbReference>
<dbReference type="InterPro" id="IPR003231">
    <property type="entry name" value="ACP"/>
</dbReference>
<dbReference type="InterPro" id="IPR036736">
    <property type="entry name" value="ACP-like_sf"/>
</dbReference>
<dbReference type="InterPro" id="IPR009081">
    <property type="entry name" value="PP-bd_ACP"/>
</dbReference>
<dbReference type="InterPro" id="IPR006162">
    <property type="entry name" value="Ppantetheine_attach_site"/>
</dbReference>
<dbReference type="NCBIfam" id="TIGR00517">
    <property type="entry name" value="acyl_carrier"/>
    <property type="match status" value="1"/>
</dbReference>
<dbReference type="NCBIfam" id="NF002148">
    <property type="entry name" value="PRK00982.1-2"/>
    <property type="match status" value="1"/>
</dbReference>
<dbReference type="NCBIfam" id="NF002149">
    <property type="entry name" value="PRK00982.1-3"/>
    <property type="match status" value="1"/>
</dbReference>
<dbReference type="NCBIfam" id="NF002150">
    <property type="entry name" value="PRK00982.1-4"/>
    <property type="match status" value="1"/>
</dbReference>
<dbReference type="NCBIfam" id="NF002151">
    <property type="entry name" value="PRK00982.1-5"/>
    <property type="match status" value="1"/>
</dbReference>
<dbReference type="PANTHER" id="PTHR20863">
    <property type="entry name" value="ACYL CARRIER PROTEIN"/>
    <property type="match status" value="1"/>
</dbReference>
<dbReference type="PANTHER" id="PTHR20863:SF76">
    <property type="entry name" value="CARRIER DOMAIN-CONTAINING PROTEIN"/>
    <property type="match status" value="1"/>
</dbReference>
<dbReference type="Pfam" id="PF00550">
    <property type="entry name" value="PP-binding"/>
    <property type="match status" value="1"/>
</dbReference>
<dbReference type="SUPFAM" id="SSF47336">
    <property type="entry name" value="ACP-like"/>
    <property type="match status" value="1"/>
</dbReference>
<dbReference type="PROSITE" id="PS50075">
    <property type="entry name" value="CARRIER"/>
    <property type="match status" value="1"/>
</dbReference>
<dbReference type="PROSITE" id="PS00012">
    <property type="entry name" value="PHOSPHOPANTETHEINE"/>
    <property type="match status" value="1"/>
</dbReference>
<evidence type="ECO:0000255" key="1">
    <source>
        <dbReference type="HAMAP-Rule" id="MF_01217"/>
    </source>
</evidence>
<evidence type="ECO:0000255" key="2">
    <source>
        <dbReference type="PROSITE-ProRule" id="PRU00258"/>
    </source>
</evidence>
<proteinExistence type="inferred from homology"/>
<sequence>MTEAEIKDKVYDIIVSKMGVNKDQIKPESKFSDDLGADSLDTVELIMELENEFDVQIPDEDAEKIGTVQQAIDYIVKK</sequence>
<name>ACP_CHLPM</name>
<reference key="1">
    <citation type="submission" date="2007-03" db="EMBL/GenBank/DDBJ databases">
        <title>Complete sequence of Prosthecochloris vibrioformis DSM 265.</title>
        <authorList>
            <consortium name="US DOE Joint Genome Institute"/>
            <person name="Copeland A."/>
            <person name="Lucas S."/>
            <person name="Lapidus A."/>
            <person name="Barry K."/>
            <person name="Detter J.C."/>
            <person name="Glavina del Rio T."/>
            <person name="Hammon N."/>
            <person name="Israni S."/>
            <person name="Pitluck S."/>
            <person name="Schmutz J."/>
            <person name="Larimer F."/>
            <person name="Land M."/>
            <person name="Hauser L."/>
            <person name="Mikhailova N."/>
            <person name="Li T."/>
            <person name="Overmann J."/>
            <person name="Schuster S.C."/>
            <person name="Bryant D.A."/>
            <person name="Richardson P."/>
        </authorList>
    </citation>
    <scope>NUCLEOTIDE SEQUENCE [LARGE SCALE GENOMIC DNA]</scope>
    <source>
        <strain>DSM 265 / 1930</strain>
    </source>
</reference>